<proteinExistence type="inferred from homology"/>
<reference key="1">
    <citation type="journal article" date="2001" name="Nature">
        <title>Genome sequence of enterohaemorrhagic Escherichia coli O157:H7.</title>
        <authorList>
            <person name="Perna N.T."/>
            <person name="Plunkett G. III"/>
            <person name="Burland V."/>
            <person name="Mau B."/>
            <person name="Glasner J.D."/>
            <person name="Rose D.J."/>
            <person name="Mayhew G.F."/>
            <person name="Evans P.S."/>
            <person name="Gregor J."/>
            <person name="Kirkpatrick H.A."/>
            <person name="Posfai G."/>
            <person name="Hackett J."/>
            <person name="Klink S."/>
            <person name="Boutin A."/>
            <person name="Shao Y."/>
            <person name="Miller L."/>
            <person name="Grotbeck E.J."/>
            <person name="Davis N.W."/>
            <person name="Lim A."/>
            <person name="Dimalanta E.T."/>
            <person name="Potamousis K."/>
            <person name="Apodaca J."/>
            <person name="Anantharaman T.S."/>
            <person name="Lin J."/>
            <person name="Yen G."/>
            <person name="Schwartz D.C."/>
            <person name="Welch R.A."/>
            <person name="Blattner F.R."/>
        </authorList>
    </citation>
    <scope>NUCLEOTIDE SEQUENCE [LARGE SCALE GENOMIC DNA]</scope>
    <source>
        <strain>O157:H7 / EDL933 / ATCC 700927 / EHEC</strain>
    </source>
</reference>
<reference key="2">
    <citation type="journal article" date="2001" name="DNA Res.">
        <title>Complete genome sequence of enterohemorrhagic Escherichia coli O157:H7 and genomic comparison with a laboratory strain K-12.</title>
        <authorList>
            <person name="Hayashi T."/>
            <person name="Makino K."/>
            <person name="Ohnishi M."/>
            <person name="Kurokawa K."/>
            <person name="Ishii K."/>
            <person name="Yokoyama K."/>
            <person name="Han C.-G."/>
            <person name="Ohtsubo E."/>
            <person name="Nakayama K."/>
            <person name="Murata T."/>
            <person name="Tanaka M."/>
            <person name="Tobe T."/>
            <person name="Iida T."/>
            <person name="Takami H."/>
            <person name="Honda T."/>
            <person name="Sasakawa C."/>
            <person name="Ogasawara N."/>
            <person name="Yasunaga T."/>
            <person name="Kuhara S."/>
            <person name="Shiba T."/>
            <person name="Hattori M."/>
            <person name="Shinagawa H."/>
        </authorList>
    </citation>
    <scope>NUCLEOTIDE SEQUENCE [LARGE SCALE GENOMIC DNA]</scope>
    <source>
        <strain>O157:H7 / Sakai / RIMD 0509952 / EHEC</strain>
    </source>
</reference>
<protein>
    <recommendedName>
        <fullName>Protein PsiE</fullName>
    </recommendedName>
</protein>
<organism>
    <name type="scientific">Escherichia coli O157:H7</name>
    <dbReference type="NCBI Taxonomy" id="83334"/>
    <lineage>
        <taxon>Bacteria</taxon>
        <taxon>Pseudomonadati</taxon>
        <taxon>Pseudomonadota</taxon>
        <taxon>Gammaproteobacteria</taxon>
        <taxon>Enterobacterales</taxon>
        <taxon>Enterobacteriaceae</taxon>
        <taxon>Escherichia</taxon>
    </lineage>
</organism>
<keyword id="KW-0997">Cell inner membrane</keyword>
<keyword id="KW-1003">Cell membrane</keyword>
<keyword id="KW-0472">Membrane</keyword>
<keyword id="KW-1185">Reference proteome</keyword>
<keyword id="KW-0812">Transmembrane</keyword>
<keyword id="KW-1133">Transmembrane helix</keyword>
<name>PSIE_ECO57</name>
<gene>
    <name type="primary">psiE</name>
    <name type="ordered locus">Z5628</name>
    <name type="ordered locus">ECs5013</name>
</gene>
<sequence length="136" mass="15553">MTSLSRPRVEFISTILQTVLNLGLLCLGLILVVFLGKETVHLADVLFAPEQASKYELVEGLVVYFLYFEFIALIVKYFQSGFHFPLRYFVYIGITAIVRLIIVDHKSPLDVLIYSAAILLLVVTLWLCNSKRLKRE</sequence>
<accession>Q8X5X8</accession>
<evidence type="ECO:0000250" key="1"/>
<evidence type="ECO:0000255" key="2"/>
<evidence type="ECO:0000305" key="3"/>
<comment type="subcellular location">
    <subcellularLocation>
        <location evidence="1">Cell inner membrane</location>
        <topology evidence="1">Multi-pass membrane protein</topology>
    </subcellularLocation>
</comment>
<comment type="similarity">
    <text evidence="3">Belongs to the PsiE family.</text>
</comment>
<dbReference type="EMBL" id="AE005174">
    <property type="protein sequence ID" value="AAG59229.1"/>
    <property type="molecule type" value="Genomic_DNA"/>
</dbReference>
<dbReference type="EMBL" id="BA000007">
    <property type="protein sequence ID" value="BAB38436.1"/>
    <property type="molecule type" value="Genomic_DNA"/>
</dbReference>
<dbReference type="PIR" id="A86096">
    <property type="entry name" value="A86096"/>
</dbReference>
<dbReference type="PIR" id="E91255">
    <property type="entry name" value="E91255"/>
</dbReference>
<dbReference type="RefSeq" id="NP_313040.1">
    <property type="nucleotide sequence ID" value="NC_002695.1"/>
</dbReference>
<dbReference type="RefSeq" id="WP_000202900.1">
    <property type="nucleotide sequence ID" value="NZ_VOAI01000027.1"/>
</dbReference>
<dbReference type="SMR" id="Q8X5X8"/>
<dbReference type="STRING" id="155864.Z5628"/>
<dbReference type="GeneID" id="914322"/>
<dbReference type="KEGG" id="ece:Z5628"/>
<dbReference type="KEGG" id="ecs:ECs_5013"/>
<dbReference type="PATRIC" id="fig|386585.9.peg.5236"/>
<dbReference type="eggNOG" id="COG3223">
    <property type="taxonomic scope" value="Bacteria"/>
</dbReference>
<dbReference type="HOGENOM" id="CLU_127561_0_1_6"/>
<dbReference type="OMA" id="HEWHQKV"/>
<dbReference type="Proteomes" id="UP000000558">
    <property type="component" value="Chromosome"/>
</dbReference>
<dbReference type="Proteomes" id="UP000002519">
    <property type="component" value="Chromosome"/>
</dbReference>
<dbReference type="GO" id="GO:0005886">
    <property type="term" value="C:plasma membrane"/>
    <property type="evidence" value="ECO:0007669"/>
    <property type="project" value="UniProtKB-SubCell"/>
</dbReference>
<dbReference type="GO" id="GO:0016036">
    <property type="term" value="P:cellular response to phosphate starvation"/>
    <property type="evidence" value="ECO:0007669"/>
    <property type="project" value="InterPro"/>
</dbReference>
<dbReference type="HAMAP" id="MF_01048">
    <property type="entry name" value="PsiE"/>
    <property type="match status" value="1"/>
</dbReference>
<dbReference type="InterPro" id="IPR009315">
    <property type="entry name" value="P_starv_induced_PsiE"/>
</dbReference>
<dbReference type="InterPro" id="IPR020948">
    <property type="entry name" value="P_starv_induced_PsiE-like"/>
</dbReference>
<dbReference type="NCBIfam" id="NF002764">
    <property type="entry name" value="PRK02833.1-2"/>
    <property type="match status" value="1"/>
</dbReference>
<dbReference type="NCBIfam" id="NF002765">
    <property type="entry name" value="PRK02833.1-3"/>
    <property type="match status" value="1"/>
</dbReference>
<dbReference type="NCBIfam" id="NF002767">
    <property type="entry name" value="PRK02833.1-5"/>
    <property type="match status" value="1"/>
</dbReference>
<dbReference type="PANTHER" id="PTHR37819">
    <property type="entry name" value="PROTEIN PSIE"/>
    <property type="match status" value="1"/>
</dbReference>
<dbReference type="PANTHER" id="PTHR37819:SF1">
    <property type="entry name" value="PROTEIN PSIE"/>
    <property type="match status" value="1"/>
</dbReference>
<dbReference type="Pfam" id="PF06146">
    <property type="entry name" value="PsiE"/>
    <property type="match status" value="1"/>
</dbReference>
<dbReference type="PIRSF" id="PIRSF029598">
    <property type="entry name" value="PsiE"/>
    <property type="match status" value="1"/>
</dbReference>
<feature type="chain" id="PRO_0000160283" description="Protein PsiE">
    <location>
        <begin position="1"/>
        <end position="136"/>
    </location>
</feature>
<feature type="topological domain" description="Cytoplasmic" evidence="2">
    <location>
        <begin position="1"/>
        <end position="14"/>
    </location>
</feature>
<feature type="transmembrane region" description="Helical" evidence="2">
    <location>
        <begin position="15"/>
        <end position="35"/>
    </location>
</feature>
<feature type="topological domain" description="Periplasmic" evidence="2">
    <location>
        <begin position="36"/>
        <end position="54"/>
    </location>
</feature>
<feature type="transmembrane region" description="Helical" evidence="2">
    <location>
        <begin position="55"/>
        <end position="75"/>
    </location>
</feature>
<feature type="topological domain" description="Cytoplasmic" evidence="2">
    <location>
        <begin position="76"/>
        <end position="81"/>
    </location>
</feature>
<feature type="transmembrane region" description="Helical" evidence="2">
    <location>
        <begin position="82"/>
        <end position="102"/>
    </location>
</feature>
<feature type="topological domain" description="Periplasmic" evidence="2">
    <location>
        <begin position="103"/>
        <end position="107"/>
    </location>
</feature>
<feature type="transmembrane region" description="Helical" evidence="2">
    <location>
        <begin position="108"/>
        <end position="128"/>
    </location>
</feature>
<feature type="topological domain" description="Cytoplasmic" evidence="2">
    <location>
        <begin position="129"/>
        <end position="136"/>
    </location>
</feature>